<feature type="signal peptide">
    <location>
        <begin position="1"/>
        <end position="32"/>
    </location>
</feature>
<feature type="chain" id="PRO_0000012360" description="Atrial natriuretic peptide receptor 1">
    <location>
        <begin position="33"/>
        <end position="1061"/>
    </location>
</feature>
<feature type="topological domain" description="Extracellular" evidence="3">
    <location>
        <begin position="33"/>
        <end position="473"/>
    </location>
</feature>
<feature type="transmembrane region" description="Helical" evidence="3">
    <location>
        <begin position="474"/>
        <end position="494"/>
    </location>
</feature>
<feature type="topological domain" description="Cytoplasmic" evidence="3">
    <location>
        <begin position="495"/>
        <end position="1061"/>
    </location>
</feature>
<feature type="domain" description="Protein kinase" evidence="5">
    <location>
        <begin position="528"/>
        <end position="805"/>
    </location>
</feature>
<feature type="domain" description="Guanylate cyclase" evidence="4">
    <location>
        <begin position="876"/>
        <end position="1006"/>
    </location>
</feature>
<feature type="binding site" evidence="1">
    <location>
        <position position="85"/>
    </location>
    <ligand>
        <name>chloride</name>
        <dbReference type="ChEBI" id="CHEBI:17996"/>
    </ligand>
</feature>
<feature type="binding site" evidence="1">
    <location>
        <position position="117"/>
    </location>
    <ligand>
        <name>chloride</name>
        <dbReference type="ChEBI" id="CHEBI:17996"/>
    </ligand>
</feature>
<feature type="binding site" evidence="1">
    <location>
        <position position="118"/>
    </location>
    <ligand>
        <name>chloride</name>
        <dbReference type="ChEBI" id="CHEBI:17996"/>
    </ligand>
</feature>
<feature type="modified residue" description="Phosphoserine" evidence="8">
    <location>
        <position position="519"/>
    </location>
</feature>
<feature type="modified residue" description="Phosphoserine" evidence="8">
    <location>
        <position position="529"/>
    </location>
</feature>
<feature type="modified residue" description="Phosphothreonine" evidence="8">
    <location>
        <position position="532"/>
    </location>
</feature>
<feature type="modified residue" description="Phosphoserine" evidence="8">
    <location>
        <position position="534"/>
    </location>
</feature>
<feature type="modified residue" description="Phosphoserine" evidence="8">
    <location>
        <position position="538"/>
    </location>
</feature>
<feature type="modified residue" description="Phosphoserine" evidence="2">
    <location>
        <position position="542"/>
    </location>
</feature>
<feature type="modified residue" description="Phosphothreonine" evidence="2">
    <location>
        <position position="545"/>
    </location>
</feature>
<feature type="glycosylation site" description="N-linked (GlcNAc...) asparagine" evidence="3">
    <location>
        <position position="34"/>
    </location>
</feature>
<feature type="glycosylation site" description="N-linked (GlcNAc...) asparagine" evidence="3">
    <location>
        <position position="45"/>
    </location>
</feature>
<feature type="glycosylation site" description="N-linked (GlcNAc...) asparagine" evidence="3">
    <location>
        <position position="212"/>
    </location>
</feature>
<feature type="glycosylation site" description="N-linked (GlcNAc...) asparagine" evidence="3">
    <location>
        <position position="338"/>
    </location>
</feature>
<feature type="glycosylation site" description="N-linked (GlcNAc...) asparagine" evidence="3">
    <location>
        <position position="379"/>
    </location>
</feature>
<feature type="glycosylation site" description="N-linked (GlcNAc...) asparagine" evidence="3">
    <location>
        <position position="386"/>
    </location>
</feature>
<feature type="glycosylation site" description="N-linked (GlcNAc...) asparagine" evidence="3">
    <location>
        <position position="427"/>
    </location>
</feature>
<feature type="disulfide bond" evidence="10">
    <location>
        <begin position="92"/>
        <end position="118"/>
    </location>
</feature>
<feature type="disulfide bond" evidence="10">
    <location>
        <begin position="196"/>
        <end position="245"/>
    </location>
</feature>
<feature type="disulfide bond" evidence="1">
    <location>
        <begin position="455"/>
        <end position="464"/>
    </location>
</feature>
<feature type="sequence variant" id="VAR_042214" description="In dbSNP:rs56019647." evidence="7">
    <original>A</original>
    <variation>V</variation>
    <location>
        <position position="182"/>
    </location>
</feature>
<feature type="sequence variant" id="VAR_042215" description="In a breast pleomorphic lobular carcinoma sample; somatic mutation." evidence="7">
    <original>F</original>
    <variation>C</variation>
    <location>
        <position position="270"/>
    </location>
</feature>
<feature type="sequence variant" id="VAR_042216" description="In dbSNP:rs55837780." evidence="7">
    <original>V</original>
    <variation>M</variation>
    <location>
        <position position="755"/>
    </location>
</feature>
<feature type="sequence variant" id="VAR_042217" description="In dbSNP:rs35240348." evidence="7">
    <original>R</original>
    <variation>Q</variation>
    <location>
        <position position="939"/>
    </location>
</feature>
<feature type="sequence variant" id="VAR_042218" description="In dbSNP:rs35479618." evidence="7">
    <original>E</original>
    <variation>K</variation>
    <location>
        <position position="967"/>
    </location>
</feature>
<feature type="sequence conflict" description="In Ref. 7; AAH63304." evidence="11" ref="7">
    <original>G</original>
    <variation>V</variation>
    <location>
        <position position="344"/>
    </location>
</feature>
<feature type="strand" evidence="22">
    <location>
        <begin position="34"/>
        <end position="41"/>
    </location>
</feature>
<feature type="helix" evidence="22">
    <location>
        <begin position="52"/>
        <end position="67"/>
    </location>
</feature>
<feature type="strand" evidence="23">
    <location>
        <begin position="72"/>
        <end position="75"/>
    </location>
</feature>
<feature type="strand" evidence="22">
    <location>
        <begin position="77"/>
        <end position="83"/>
    </location>
</feature>
<feature type="strand" evidence="22">
    <location>
        <begin position="90"/>
        <end position="92"/>
    </location>
</feature>
<feature type="turn" evidence="22">
    <location>
        <begin position="94"/>
        <end position="96"/>
    </location>
</feature>
<feature type="helix" evidence="22">
    <location>
        <begin position="97"/>
        <end position="108"/>
    </location>
</feature>
<feature type="strand" evidence="22">
    <location>
        <begin position="111"/>
        <end position="114"/>
    </location>
</feature>
<feature type="helix" evidence="22">
    <location>
        <begin position="119"/>
        <end position="132"/>
    </location>
</feature>
<feature type="strand" evidence="22">
    <location>
        <begin position="136"/>
        <end position="139"/>
    </location>
</feature>
<feature type="helix" evidence="22">
    <location>
        <begin position="145"/>
        <end position="147"/>
    </location>
</feature>
<feature type="turn" evidence="22">
    <location>
        <begin position="149"/>
        <end position="151"/>
    </location>
</feature>
<feature type="strand" evidence="22">
    <location>
        <begin position="155"/>
        <end position="157"/>
    </location>
</feature>
<feature type="helix" evidence="22">
    <location>
        <begin position="163"/>
        <end position="176"/>
    </location>
</feature>
<feature type="strand" evidence="22">
    <location>
        <begin position="180"/>
        <end position="188"/>
    </location>
</feature>
<feature type="strand" evidence="22">
    <location>
        <begin position="190"/>
        <end position="192"/>
    </location>
</feature>
<feature type="helix" evidence="22">
    <location>
        <begin position="195"/>
        <end position="210"/>
    </location>
</feature>
<feature type="strand" evidence="22">
    <location>
        <begin position="214"/>
        <end position="221"/>
    </location>
</feature>
<feature type="helix" evidence="22">
    <location>
        <begin position="225"/>
        <end position="238"/>
    </location>
</feature>
<feature type="strand" evidence="22">
    <location>
        <begin position="240"/>
        <end position="245"/>
    </location>
</feature>
<feature type="helix" evidence="22">
    <location>
        <begin position="248"/>
        <end position="261"/>
    </location>
</feature>
<feature type="turn" evidence="22">
    <location>
        <begin position="265"/>
        <end position="267"/>
    </location>
</feature>
<feature type="strand" evidence="22">
    <location>
        <begin position="269"/>
        <end position="273"/>
    </location>
</feature>
<feature type="helix" evidence="22">
    <location>
        <begin position="278"/>
        <end position="280"/>
    </location>
</feature>
<feature type="strand" evidence="22">
    <location>
        <begin position="295"/>
        <end position="297"/>
    </location>
</feature>
<feature type="helix" evidence="22">
    <location>
        <begin position="299"/>
        <end position="305"/>
    </location>
</feature>
<feature type="helix" evidence="22">
    <location>
        <begin position="306"/>
        <end position="308"/>
    </location>
</feature>
<feature type="strand" evidence="22">
    <location>
        <begin position="309"/>
        <end position="314"/>
    </location>
</feature>
<feature type="helix" evidence="22">
    <location>
        <begin position="320"/>
        <end position="337"/>
    </location>
</feature>
<feature type="helix" evidence="21">
    <location>
        <begin position="345"/>
        <end position="347"/>
    </location>
</feature>
<feature type="helix" evidence="22">
    <location>
        <begin position="348"/>
        <end position="369"/>
    </location>
</feature>
<feature type="helix" evidence="22">
    <location>
        <begin position="377"/>
        <end position="381"/>
    </location>
</feature>
<feature type="turn" evidence="22">
    <location>
        <begin position="382"/>
        <end position="386"/>
    </location>
</feature>
<feature type="strand" evidence="22">
    <location>
        <begin position="387"/>
        <end position="391"/>
    </location>
</feature>
<feature type="strand" evidence="22">
    <location>
        <begin position="394"/>
        <end position="398"/>
    </location>
</feature>
<feature type="strand" evidence="22">
    <location>
        <begin position="402"/>
        <end position="404"/>
    </location>
</feature>
<feature type="strand" evidence="22">
    <location>
        <begin position="408"/>
        <end position="413"/>
    </location>
</feature>
<feature type="turn" evidence="22">
    <location>
        <begin position="415"/>
        <end position="417"/>
    </location>
</feature>
<feature type="strand" evidence="22">
    <location>
        <begin position="420"/>
        <end position="427"/>
    </location>
</feature>
<feature type="turn" evidence="22">
    <location>
        <begin position="428"/>
        <end position="431"/>
    </location>
</feature>
<feature type="strand" evidence="22">
    <location>
        <begin position="432"/>
        <end position="435"/>
    </location>
</feature>
<feature type="strand" evidence="21">
    <location>
        <begin position="444"/>
        <end position="447"/>
    </location>
</feature>
<feature type="helix" evidence="24">
    <location>
        <begin position="846"/>
        <end position="848"/>
    </location>
</feature>
<feature type="strand" evidence="24">
    <location>
        <begin position="850"/>
        <end position="853"/>
    </location>
</feature>
<feature type="helix" evidence="24">
    <location>
        <begin position="855"/>
        <end position="862"/>
    </location>
</feature>
<feature type="strand" evidence="24">
    <location>
        <begin position="870"/>
        <end position="881"/>
    </location>
</feature>
<feature type="helix" evidence="24">
    <location>
        <begin position="885"/>
        <end position="888"/>
    </location>
</feature>
<feature type="helix" evidence="24">
    <location>
        <begin position="894"/>
        <end position="912"/>
    </location>
</feature>
<feature type="strand" evidence="24">
    <location>
        <begin position="918"/>
        <end position="923"/>
    </location>
</feature>
<feature type="strand" evidence="24">
    <location>
        <begin position="926"/>
        <end position="935"/>
    </location>
</feature>
<feature type="helix" evidence="24">
    <location>
        <begin position="940"/>
        <end position="956"/>
    </location>
</feature>
<feature type="strand" evidence="24">
    <location>
        <begin position="972"/>
        <end position="985"/>
    </location>
</feature>
<feature type="strand" evidence="24">
    <location>
        <begin position="987"/>
        <end position="989"/>
    </location>
</feature>
<feature type="strand" evidence="24">
    <location>
        <begin position="991"/>
        <end position="996"/>
    </location>
</feature>
<feature type="helix" evidence="24">
    <location>
        <begin position="997"/>
        <end position="1008"/>
    </location>
</feature>
<feature type="strand" evidence="24">
    <location>
        <begin position="1013"/>
        <end position="1016"/>
    </location>
</feature>
<feature type="helix" evidence="24">
    <location>
        <begin position="1018"/>
        <end position="1027"/>
    </location>
</feature>
<feature type="strand" evidence="24">
    <location>
        <begin position="1030"/>
        <end position="1038"/>
    </location>
</feature>
<feature type="strand" evidence="24">
    <location>
        <begin position="1047"/>
        <end position="1054"/>
    </location>
</feature>
<gene>
    <name evidence="13" type="primary">NPR1</name>
    <name type="synonym">ANPRA</name>
</gene>
<dbReference type="EC" id="4.6.1.2" evidence="6"/>
<dbReference type="EMBL" id="X15357">
    <property type="protein sequence ID" value="CAA33417.1"/>
    <property type="molecule type" value="mRNA"/>
</dbReference>
<dbReference type="EMBL" id="AB010491">
    <property type="protein sequence ID" value="BAA31199.1"/>
    <property type="molecule type" value="Genomic_DNA"/>
</dbReference>
<dbReference type="EMBL" id="AF190631">
    <property type="protein sequence ID" value="AAF01340.1"/>
    <property type="molecule type" value="Genomic_DNA"/>
</dbReference>
<dbReference type="EMBL" id="EU326310">
    <property type="protein sequence ID" value="ACA05918.1"/>
    <property type="molecule type" value="Genomic_DNA"/>
</dbReference>
<dbReference type="EMBL" id="AL713889">
    <property type="status" value="NOT_ANNOTATED_CDS"/>
    <property type="molecule type" value="Genomic_DNA"/>
</dbReference>
<dbReference type="EMBL" id="CH471121">
    <property type="protein sequence ID" value="EAW53284.1"/>
    <property type="molecule type" value="Genomic_DNA"/>
</dbReference>
<dbReference type="EMBL" id="BC063304">
    <property type="protein sequence ID" value="AAH63304.1"/>
    <property type="molecule type" value="mRNA"/>
</dbReference>
<dbReference type="EMBL" id="S72628">
    <property type="protein sequence ID" value="AAD14112.1"/>
    <property type="molecule type" value="mRNA"/>
</dbReference>
<dbReference type="CCDS" id="CCDS1051.1"/>
<dbReference type="PIR" id="S04459">
    <property type="entry name" value="OYHUAR"/>
</dbReference>
<dbReference type="RefSeq" id="NP_000897.3">
    <property type="nucleotide sequence ID" value="NM_000906.3"/>
</dbReference>
<dbReference type="PDB" id="8TG9">
    <property type="method" value="EM"/>
    <property type="resolution" value="3.08 A"/>
    <property type="chains" value="A/B=33-473"/>
</dbReference>
<dbReference type="PDB" id="8TGA">
    <property type="method" value="EM"/>
    <property type="resolution" value="3.65 A"/>
    <property type="chains" value="A/B=33-473"/>
</dbReference>
<dbReference type="PDB" id="9BCL">
    <property type="method" value="EM"/>
    <property type="resolution" value="2.90 A"/>
    <property type="chains" value="A/B=32-1061"/>
</dbReference>
<dbReference type="PDB" id="9BCN">
    <property type="method" value="EM"/>
    <property type="resolution" value="2.90 A"/>
    <property type="chains" value="A/B=32-1061"/>
</dbReference>
<dbReference type="PDB" id="9BCO">
    <property type="method" value="EM"/>
    <property type="resolution" value="4.40 A"/>
    <property type="chains" value="A/B=32-1061"/>
</dbReference>
<dbReference type="PDB" id="9BCP">
    <property type="method" value="EM"/>
    <property type="resolution" value="4.10 A"/>
    <property type="chains" value="A/B=32-1061"/>
</dbReference>
<dbReference type="PDB" id="9BCQ">
    <property type="method" value="EM"/>
    <property type="resolution" value="3.10 A"/>
    <property type="chains" value="A/B=32-1061"/>
</dbReference>
<dbReference type="PDB" id="9BCS">
    <property type="method" value="EM"/>
    <property type="resolution" value="4.40 A"/>
    <property type="chains" value="A/B=32-1061"/>
</dbReference>
<dbReference type="PDB" id="9BCV">
    <property type="method" value="EM"/>
    <property type="resolution" value="3.20 A"/>
    <property type="chains" value="A/B=33-1061"/>
</dbReference>
<dbReference type="PDBsum" id="8TG9"/>
<dbReference type="PDBsum" id="8TGA"/>
<dbReference type="PDBsum" id="9BCL"/>
<dbReference type="PDBsum" id="9BCN"/>
<dbReference type="PDBsum" id="9BCO"/>
<dbReference type="PDBsum" id="9BCP"/>
<dbReference type="PDBsum" id="9BCQ"/>
<dbReference type="PDBsum" id="9BCS"/>
<dbReference type="PDBsum" id="9BCV"/>
<dbReference type="EMDB" id="EMD-41233"/>
<dbReference type="EMDB" id="EMD-41234"/>
<dbReference type="EMDB" id="EMD-44429"/>
<dbReference type="EMDB" id="EMD-44430"/>
<dbReference type="EMDB" id="EMD-44431"/>
<dbReference type="EMDB" id="EMD-44432"/>
<dbReference type="EMDB" id="EMD-44433"/>
<dbReference type="EMDB" id="EMD-44434"/>
<dbReference type="EMDB" id="EMD-44436"/>
<dbReference type="EMDB" id="EMD-44437"/>
<dbReference type="EMDB" id="EMD-44440"/>
<dbReference type="SMR" id="P16066"/>
<dbReference type="BioGRID" id="110941">
    <property type="interactions" value="14"/>
</dbReference>
<dbReference type="ComplexPortal" id="CPX-35">
    <property type="entry name" value="ANPR-A receptor complex"/>
</dbReference>
<dbReference type="CORUM" id="P16066"/>
<dbReference type="DIP" id="DIP-46246N"/>
<dbReference type="FunCoup" id="P16066">
    <property type="interactions" value="564"/>
</dbReference>
<dbReference type="IntAct" id="P16066">
    <property type="interactions" value="6"/>
</dbReference>
<dbReference type="MINT" id="P16066"/>
<dbReference type="STRING" id="9606.ENSP00000357669"/>
<dbReference type="BindingDB" id="P16066"/>
<dbReference type="ChEMBL" id="CHEMBL1988"/>
<dbReference type="DrugBank" id="DB01612">
    <property type="generic name" value="Amyl Nitrite"/>
</dbReference>
<dbReference type="DrugBank" id="DB12805">
    <property type="generic name" value="Ataciguat"/>
</dbReference>
<dbReference type="DrugBank" id="DB01613">
    <property type="generic name" value="Erythrityl tetranitrate"/>
</dbReference>
<dbReference type="DrugBank" id="DB00883">
    <property type="generic name" value="Isosorbide dinitrate"/>
</dbReference>
<dbReference type="DrugBank" id="DB04899">
    <property type="generic name" value="Nesiritide"/>
</dbReference>
<dbReference type="DrugBank" id="DB00727">
    <property type="generic name" value="Nitroglycerin"/>
</dbReference>
<dbReference type="DrugBank" id="DB00325">
    <property type="generic name" value="Nitroprusside"/>
</dbReference>
<dbReference type="DrugBank" id="DB15355">
    <property type="generic name" value="PL-3994"/>
</dbReference>
<dbReference type="DrugBank" id="DB05034">
    <property type="generic name" value="Ularitide"/>
</dbReference>
<dbReference type="DrugCentral" id="P16066"/>
<dbReference type="GuidetoPHARMACOLOGY" id="1747"/>
<dbReference type="TCDB" id="8.A.85.1.6">
    <property type="family name" value="the guanylate cyclase (gc) family"/>
</dbReference>
<dbReference type="GlyCosmos" id="P16066">
    <property type="glycosylation" value="7 sites, No reported glycans"/>
</dbReference>
<dbReference type="GlyGen" id="P16066">
    <property type="glycosylation" value="8 sites, 3 N-linked glycans (3 sites)"/>
</dbReference>
<dbReference type="iPTMnet" id="P16066"/>
<dbReference type="PhosphoSitePlus" id="P16066"/>
<dbReference type="BioMuta" id="NPR1"/>
<dbReference type="DMDM" id="113912"/>
<dbReference type="jPOST" id="P16066"/>
<dbReference type="MassIVE" id="P16066"/>
<dbReference type="PaxDb" id="9606-ENSP00000357669"/>
<dbReference type="PeptideAtlas" id="P16066"/>
<dbReference type="ProteomicsDB" id="53265"/>
<dbReference type="Pumba" id="P16066"/>
<dbReference type="ABCD" id="P16066">
    <property type="antibodies" value="1 sequenced antibody"/>
</dbReference>
<dbReference type="Antibodypedia" id="20386">
    <property type="antibodies" value="322 antibodies from 32 providers"/>
</dbReference>
<dbReference type="DNASU" id="4881"/>
<dbReference type="Ensembl" id="ENST00000368680.4">
    <property type="protein sequence ID" value="ENSP00000357669.3"/>
    <property type="gene ID" value="ENSG00000169418.10"/>
</dbReference>
<dbReference type="GeneID" id="4881"/>
<dbReference type="KEGG" id="hsa:4881"/>
<dbReference type="MANE-Select" id="ENST00000368680.4">
    <property type="protein sequence ID" value="ENSP00000357669.3"/>
    <property type="RefSeq nucleotide sequence ID" value="NM_000906.4"/>
    <property type="RefSeq protein sequence ID" value="NP_000897.3"/>
</dbReference>
<dbReference type="UCSC" id="uc001fcs.5">
    <property type="organism name" value="human"/>
</dbReference>
<dbReference type="AGR" id="HGNC:7943"/>
<dbReference type="CTD" id="4881"/>
<dbReference type="DisGeNET" id="4881"/>
<dbReference type="GeneCards" id="NPR1"/>
<dbReference type="HGNC" id="HGNC:7943">
    <property type="gene designation" value="NPR1"/>
</dbReference>
<dbReference type="HPA" id="ENSG00000169418">
    <property type="expression patterns" value="Tissue enhanced (adipose)"/>
</dbReference>
<dbReference type="MIM" id="108960">
    <property type="type" value="gene"/>
</dbReference>
<dbReference type="neXtProt" id="NX_P16066"/>
<dbReference type="OpenTargets" id="ENSG00000169418"/>
<dbReference type="PharmGKB" id="PA31736"/>
<dbReference type="VEuPathDB" id="HostDB:ENSG00000169418"/>
<dbReference type="eggNOG" id="KOG1023">
    <property type="taxonomic scope" value="Eukaryota"/>
</dbReference>
<dbReference type="GeneTree" id="ENSGT00940000156223"/>
<dbReference type="HOGENOM" id="CLU_001072_1_3_1"/>
<dbReference type="InParanoid" id="P16066"/>
<dbReference type="OMA" id="KCAYEKS"/>
<dbReference type="OrthoDB" id="302535at2759"/>
<dbReference type="PAN-GO" id="P16066">
    <property type="GO annotations" value="6 GO annotations based on evolutionary models"/>
</dbReference>
<dbReference type="PhylomeDB" id="P16066"/>
<dbReference type="TreeFam" id="TF106338"/>
<dbReference type="BRENDA" id="4.6.1.2">
    <property type="organism ID" value="2681"/>
</dbReference>
<dbReference type="PathwayCommons" id="P16066"/>
<dbReference type="Reactome" id="R-HSA-5578768">
    <property type="pathway name" value="Physiological factors"/>
</dbReference>
<dbReference type="SignaLink" id="P16066"/>
<dbReference type="SIGNOR" id="P16066"/>
<dbReference type="BioGRID-ORCS" id="4881">
    <property type="hits" value="18 hits in 1192 CRISPR screens"/>
</dbReference>
<dbReference type="ChiTaRS" id="NPR1">
    <property type="organism name" value="human"/>
</dbReference>
<dbReference type="GeneWiki" id="NPR1"/>
<dbReference type="GenomeRNAi" id="4881"/>
<dbReference type="Pharos" id="P16066">
    <property type="development level" value="Tclin"/>
</dbReference>
<dbReference type="PRO" id="PR:P16066"/>
<dbReference type="Proteomes" id="UP000005640">
    <property type="component" value="Chromosome 1"/>
</dbReference>
<dbReference type="RNAct" id="P16066">
    <property type="molecule type" value="protein"/>
</dbReference>
<dbReference type="Bgee" id="ENSG00000169418">
    <property type="expression patterns" value="Expressed in descending thoracic aorta and 174 other cell types or tissues"/>
</dbReference>
<dbReference type="ExpressionAtlas" id="P16066">
    <property type="expression patterns" value="baseline and differential"/>
</dbReference>
<dbReference type="GO" id="GO:1990620">
    <property type="term" value="C:ANPR-A receptor complex"/>
    <property type="evidence" value="ECO:0000250"/>
    <property type="project" value="ComplexPortal"/>
</dbReference>
<dbReference type="GO" id="GO:0005886">
    <property type="term" value="C:plasma membrane"/>
    <property type="evidence" value="ECO:0000318"/>
    <property type="project" value="GO_Central"/>
</dbReference>
<dbReference type="GO" id="GO:0043235">
    <property type="term" value="C:receptor complex"/>
    <property type="evidence" value="ECO:0000314"/>
    <property type="project" value="MGI"/>
</dbReference>
<dbReference type="GO" id="GO:0005524">
    <property type="term" value="F:ATP binding"/>
    <property type="evidence" value="ECO:0007669"/>
    <property type="project" value="InterPro"/>
</dbReference>
<dbReference type="GO" id="GO:0008528">
    <property type="term" value="F:G protein-coupled peptide receptor activity"/>
    <property type="evidence" value="ECO:0000303"/>
    <property type="project" value="UniProtKB"/>
</dbReference>
<dbReference type="GO" id="GO:0005525">
    <property type="term" value="F:GTP binding"/>
    <property type="evidence" value="ECO:0007669"/>
    <property type="project" value="UniProtKB-KW"/>
</dbReference>
<dbReference type="GO" id="GO:0004383">
    <property type="term" value="F:guanylate cyclase activity"/>
    <property type="evidence" value="ECO:0000314"/>
    <property type="project" value="UniProtKB"/>
</dbReference>
<dbReference type="GO" id="GO:0042562">
    <property type="term" value="F:hormone binding"/>
    <property type="evidence" value="ECO:0000353"/>
    <property type="project" value="UniProtKB"/>
</dbReference>
<dbReference type="GO" id="GO:0016941">
    <property type="term" value="F:natriuretic peptide receptor activity"/>
    <property type="evidence" value="ECO:0000314"/>
    <property type="project" value="UniProtKB"/>
</dbReference>
<dbReference type="GO" id="GO:0017046">
    <property type="term" value="F:peptide hormone binding"/>
    <property type="evidence" value="ECO:0000353"/>
    <property type="project" value="UniProtKB"/>
</dbReference>
<dbReference type="GO" id="GO:0001653">
    <property type="term" value="F:peptide receptor activity"/>
    <property type="evidence" value="ECO:0000318"/>
    <property type="project" value="GO_Central"/>
</dbReference>
<dbReference type="GO" id="GO:0004672">
    <property type="term" value="F:protein kinase activity"/>
    <property type="evidence" value="ECO:0007669"/>
    <property type="project" value="InterPro"/>
</dbReference>
<dbReference type="GO" id="GO:0097746">
    <property type="term" value="P:blood vessel diameter maintenance"/>
    <property type="evidence" value="ECO:0000303"/>
    <property type="project" value="UniProtKB"/>
</dbReference>
<dbReference type="GO" id="GO:0007589">
    <property type="term" value="P:body fluid secretion"/>
    <property type="evidence" value="ECO:0000304"/>
    <property type="project" value="UniProtKB"/>
</dbReference>
<dbReference type="GO" id="GO:0007166">
    <property type="term" value="P:cell surface receptor signaling pathway"/>
    <property type="evidence" value="ECO:0000303"/>
    <property type="project" value="UniProtKB"/>
</dbReference>
<dbReference type="GO" id="GO:0006182">
    <property type="term" value="P:cGMP biosynthetic process"/>
    <property type="evidence" value="ECO:0000314"/>
    <property type="project" value="GO_Central"/>
</dbReference>
<dbReference type="GO" id="GO:0019934">
    <property type="term" value="P:cGMP-mediated signaling"/>
    <property type="evidence" value="ECO:0007669"/>
    <property type="project" value="Ensembl"/>
</dbReference>
<dbReference type="GO" id="GO:0042417">
    <property type="term" value="P:dopamine metabolic process"/>
    <property type="evidence" value="ECO:0007669"/>
    <property type="project" value="Ensembl"/>
</dbReference>
<dbReference type="GO" id="GO:0016525">
    <property type="term" value="P:negative regulation of angiogenesis"/>
    <property type="evidence" value="ECO:0000304"/>
    <property type="project" value="UniProtKB"/>
</dbReference>
<dbReference type="GO" id="GO:0030308">
    <property type="term" value="P:negative regulation of cell growth"/>
    <property type="evidence" value="ECO:0000303"/>
    <property type="project" value="UniProtKB"/>
</dbReference>
<dbReference type="GO" id="GO:0048662">
    <property type="term" value="P:negative regulation of smooth muscle cell proliferation"/>
    <property type="evidence" value="ECO:0007669"/>
    <property type="project" value="Ensembl"/>
</dbReference>
<dbReference type="GO" id="GO:0010753">
    <property type="term" value="P:positive regulation of cGMP-mediated signaling"/>
    <property type="evidence" value="ECO:0007669"/>
    <property type="project" value="Ensembl"/>
</dbReference>
<dbReference type="GO" id="GO:0035815">
    <property type="term" value="P:positive regulation of renal sodium excretion"/>
    <property type="evidence" value="ECO:0000304"/>
    <property type="project" value="UniProtKB"/>
</dbReference>
<dbReference type="GO" id="GO:0035810">
    <property type="term" value="P:positive regulation of urine volume"/>
    <property type="evidence" value="ECO:0000304"/>
    <property type="project" value="UniProtKB"/>
</dbReference>
<dbReference type="GO" id="GO:0007168">
    <property type="term" value="P:receptor guanylyl cyclase signaling pathway"/>
    <property type="evidence" value="ECO:0000314"/>
    <property type="project" value="UniProtKB"/>
</dbReference>
<dbReference type="GO" id="GO:0008217">
    <property type="term" value="P:regulation of blood pressure"/>
    <property type="evidence" value="ECO:0000250"/>
    <property type="project" value="ComplexPortal"/>
</dbReference>
<dbReference type="GO" id="GO:0043114">
    <property type="term" value="P:regulation of vascular permeability"/>
    <property type="evidence" value="ECO:0000304"/>
    <property type="project" value="UniProtKB"/>
</dbReference>
<dbReference type="CDD" id="cd07302">
    <property type="entry name" value="CHD"/>
    <property type="match status" value="1"/>
</dbReference>
<dbReference type="CDD" id="cd06385">
    <property type="entry name" value="PBP1_NPR_A"/>
    <property type="match status" value="1"/>
</dbReference>
<dbReference type="CDD" id="cd14042">
    <property type="entry name" value="PK_GC-A_B"/>
    <property type="match status" value="1"/>
</dbReference>
<dbReference type="FunFam" id="1.10.510.10:FF:000270">
    <property type="entry name" value="Guanylate cyclase"/>
    <property type="match status" value="1"/>
</dbReference>
<dbReference type="FunFam" id="3.30.200.20:FF:001106">
    <property type="entry name" value="Guanylate cyclase"/>
    <property type="match status" value="1"/>
</dbReference>
<dbReference type="FunFam" id="3.30.70.1230:FF:000004">
    <property type="entry name" value="Guanylate cyclase"/>
    <property type="match status" value="1"/>
</dbReference>
<dbReference type="FunFam" id="3.40.50.2300:FF:000153">
    <property type="entry name" value="Guanylate cyclase"/>
    <property type="match status" value="1"/>
</dbReference>
<dbReference type="FunFam" id="3.40.50.2300:FF:000200">
    <property type="entry name" value="Guanylate cyclase"/>
    <property type="match status" value="1"/>
</dbReference>
<dbReference type="FunFam" id="3.40.50.2300:FF:000228">
    <property type="entry name" value="Guanylate cyclase"/>
    <property type="match status" value="1"/>
</dbReference>
<dbReference type="Gene3D" id="3.40.50.2300">
    <property type="match status" value="2"/>
</dbReference>
<dbReference type="Gene3D" id="3.30.70.1230">
    <property type="entry name" value="Nucleotide cyclase"/>
    <property type="match status" value="1"/>
</dbReference>
<dbReference type="Gene3D" id="1.10.510.10">
    <property type="entry name" value="Transferase(Phosphotransferase) domain 1"/>
    <property type="match status" value="1"/>
</dbReference>
<dbReference type="InterPro" id="IPR001054">
    <property type="entry name" value="A/G_cyclase"/>
</dbReference>
<dbReference type="InterPro" id="IPR018297">
    <property type="entry name" value="A/G_cyclase_CS"/>
</dbReference>
<dbReference type="InterPro" id="IPR001828">
    <property type="entry name" value="ANF_lig-bd_rcpt"/>
</dbReference>
<dbReference type="InterPro" id="IPR001170">
    <property type="entry name" value="ANPR/GUC"/>
</dbReference>
<dbReference type="InterPro" id="IPR050401">
    <property type="entry name" value="Cyclic_nucleotide_synthase"/>
</dbReference>
<dbReference type="InterPro" id="IPR011009">
    <property type="entry name" value="Kinase-like_dom_sf"/>
</dbReference>
<dbReference type="InterPro" id="IPR029787">
    <property type="entry name" value="Nucleotide_cyclase"/>
</dbReference>
<dbReference type="InterPro" id="IPR028082">
    <property type="entry name" value="Peripla_BP_I"/>
</dbReference>
<dbReference type="InterPro" id="IPR000719">
    <property type="entry name" value="Prot_kinase_dom"/>
</dbReference>
<dbReference type="InterPro" id="IPR001245">
    <property type="entry name" value="Ser-Thr/Tyr_kinase_cat_dom"/>
</dbReference>
<dbReference type="PANTHER" id="PTHR11920:SF300">
    <property type="entry name" value="ATRIAL NATRIURETIC PEPTIDE RECEPTOR 1"/>
    <property type="match status" value="1"/>
</dbReference>
<dbReference type="PANTHER" id="PTHR11920">
    <property type="entry name" value="GUANYLYL CYCLASE"/>
    <property type="match status" value="1"/>
</dbReference>
<dbReference type="Pfam" id="PF01094">
    <property type="entry name" value="ANF_receptor"/>
    <property type="match status" value="1"/>
</dbReference>
<dbReference type="Pfam" id="PF00211">
    <property type="entry name" value="Guanylate_cyc"/>
    <property type="match status" value="1"/>
</dbReference>
<dbReference type="Pfam" id="PF07714">
    <property type="entry name" value="PK_Tyr_Ser-Thr"/>
    <property type="match status" value="1"/>
</dbReference>
<dbReference type="PRINTS" id="PR00255">
    <property type="entry name" value="NATPEPTIDER"/>
</dbReference>
<dbReference type="SMART" id="SM00044">
    <property type="entry name" value="CYCc"/>
    <property type="match status" value="1"/>
</dbReference>
<dbReference type="SUPFAM" id="SSF55073">
    <property type="entry name" value="Nucleotide cyclase"/>
    <property type="match status" value="1"/>
</dbReference>
<dbReference type="SUPFAM" id="SSF53822">
    <property type="entry name" value="Periplasmic binding protein-like I"/>
    <property type="match status" value="1"/>
</dbReference>
<dbReference type="SUPFAM" id="SSF56112">
    <property type="entry name" value="Protein kinase-like (PK-like)"/>
    <property type="match status" value="1"/>
</dbReference>
<dbReference type="PROSITE" id="PS00458">
    <property type="entry name" value="ANF_RECEPTORS"/>
    <property type="match status" value="1"/>
</dbReference>
<dbReference type="PROSITE" id="PS00452">
    <property type="entry name" value="GUANYLATE_CYCLASE_1"/>
    <property type="match status" value="1"/>
</dbReference>
<dbReference type="PROSITE" id="PS50125">
    <property type="entry name" value="GUANYLATE_CYCLASE_2"/>
    <property type="match status" value="1"/>
</dbReference>
<dbReference type="PROSITE" id="PS50011">
    <property type="entry name" value="PROTEIN_KINASE_DOM"/>
    <property type="match status" value="1"/>
</dbReference>
<keyword id="KW-0002">3D-structure</keyword>
<keyword id="KW-0141">cGMP biosynthesis</keyword>
<keyword id="KW-0868">Chloride</keyword>
<keyword id="KW-1015">Disulfide bond</keyword>
<keyword id="KW-0325">Glycoprotein</keyword>
<keyword id="KW-0342">GTP-binding</keyword>
<keyword id="KW-0456">Lyase</keyword>
<keyword id="KW-0472">Membrane</keyword>
<keyword id="KW-0547">Nucleotide-binding</keyword>
<keyword id="KW-0597">Phosphoprotein</keyword>
<keyword id="KW-1267">Proteomics identification</keyword>
<keyword id="KW-0675">Receptor</keyword>
<keyword id="KW-1185">Reference proteome</keyword>
<keyword id="KW-0732">Signal</keyword>
<keyword id="KW-0812">Transmembrane</keyword>
<keyword id="KW-1133">Transmembrane helix</keyword>
<keyword id="KW-0838">Vasoactive</keyword>
<accession>P16066</accession>
<accession>B0ZBF0</accession>
<accession>Q5SR08</accession>
<accession>Q6P4Q3</accession>
<evidence type="ECO:0000250" key="1"/>
<evidence type="ECO:0000250" key="2">
    <source>
        <dbReference type="UniProtKB" id="P18910"/>
    </source>
</evidence>
<evidence type="ECO:0000255" key="3"/>
<evidence type="ECO:0000255" key="4">
    <source>
        <dbReference type="PROSITE-ProRule" id="PRU00099"/>
    </source>
</evidence>
<evidence type="ECO:0000255" key="5">
    <source>
        <dbReference type="PROSITE-ProRule" id="PRU00159"/>
    </source>
</evidence>
<evidence type="ECO:0000269" key="6">
    <source>
    </source>
</evidence>
<evidence type="ECO:0000269" key="7">
    <source>
    </source>
</evidence>
<evidence type="ECO:0000269" key="8">
    <source>
    </source>
</evidence>
<evidence type="ECO:0000269" key="9">
    <source>
    </source>
</evidence>
<evidence type="ECO:0000269" key="10">
    <source>
    </source>
</evidence>
<evidence type="ECO:0000305" key="11"/>
<evidence type="ECO:0000305" key="12">
    <source>
    </source>
</evidence>
<evidence type="ECO:0000312" key="13">
    <source>
        <dbReference type="HGNC" id="HGNC:7943"/>
    </source>
</evidence>
<evidence type="ECO:0007744" key="14">
    <source>
        <dbReference type="PDB" id="9BCL"/>
    </source>
</evidence>
<evidence type="ECO:0007744" key="15">
    <source>
        <dbReference type="PDB" id="9BCN"/>
    </source>
</evidence>
<evidence type="ECO:0007744" key="16">
    <source>
        <dbReference type="PDB" id="9BCO"/>
    </source>
</evidence>
<evidence type="ECO:0007744" key="17">
    <source>
        <dbReference type="PDB" id="9BCP"/>
    </source>
</evidence>
<evidence type="ECO:0007744" key="18">
    <source>
        <dbReference type="PDB" id="9BCQ"/>
    </source>
</evidence>
<evidence type="ECO:0007744" key="19">
    <source>
        <dbReference type="PDB" id="9BCS"/>
    </source>
</evidence>
<evidence type="ECO:0007744" key="20">
    <source>
        <dbReference type="PDB" id="9BCV"/>
    </source>
</evidence>
<evidence type="ECO:0007829" key="21">
    <source>
        <dbReference type="PDB" id="8TG9"/>
    </source>
</evidence>
<evidence type="ECO:0007829" key="22">
    <source>
        <dbReference type="PDB" id="9BCL"/>
    </source>
</evidence>
<evidence type="ECO:0007829" key="23">
    <source>
        <dbReference type="PDB" id="9BCN"/>
    </source>
</evidence>
<evidence type="ECO:0007829" key="24">
    <source>
        <dbReference type="PDB" id="9BCV"/>
    </source>
</evidence>
<proteinExistence type="evidence at protein level"/>
<organism>
    <name type="scientific">Homo sapiens</name>
    <name type="common">Human</name>
    <dbReference type="NCBI Taxonomy" id="9606"/>
    <lineage>
        <taxon>Eukaryota</taxon>
        <taxon>Metazoa</taxon>
        <taxon>Chordata</taxon>
        <taxon>Craniata</taxon>
        <taxon>Vertebrata</taxon>
        <taxon>Euteleostomi</taxon>
        <taxon>Mammalia</taxon>
        <taxon>Eutheria</taxon>
        <taxon>Euarchontoglires</taxon>
        <taxon>Primates</taxon>
        <taxon>Haplorrhini</taxon>
        <taxon>Catarrhini</taxon>
        <taxon>Hominidae</taxon>
        <taxon>Homo</taxon>
    </lineage>
</organism>
<sequence>MPGPRRPAGSRLRLLLLLLLPPLLLLLRGSHAGNLTVAVVLPLANTSYPWSWARVGPAVELALAQVKARPDLLPGWTVRTVLGSSENALGVCSDTAAPLAAVDLKWEHNPAVFLGPGCVYAAAPVGRFTAHWRVPLLTAGAPALGFGVKDEYALTTRAGPSYAKLGDFVAALHRRLGWERQALMLYAYRPGDEEHCFFLVEGLFMRVRDRLNITVDHLEFAEDDLSHYTRLLRTMPRKGRVIYICSSPDAFRTLMLLALEAGLCGEDYVFFHLDIFGQSLQGGQGPAPRRPWERGDGQDVSARQAFQAAKIITYKDPDNPEYLEFLKQLKHLAYEQFNFTMEDGLVNTIPASFHDGLLLYIQAVTETLAHGGTVTDGENITQRMWNRSFQGVTGYLKIDSSGDRETDFSLWDMDPENGAFRVVLNYNGTSQELVAVSGRKLNWPLGYPPPDIPKCGFDNEDPACNQDHLSTLEVLALVGSLSLLGILIVSFFIYRKMQLEKELASELWRVRWEDVEPSSLERHLRSAGSRLTLSGRGSNYGSLLTTEGQFQVFAKTAYYKGNLVAVKRVNRKRIELTRKVLFELKHMRDVQNEHLTRFVGACTDPPNICILTEYCPRGSLQDILENESITLDWMFRYSLTNDIVKGMLFLHNGAICSHGNLKSSNCVVDGRFVLKITDYGLESFRDLDPEQGHTVYAKKLWTAPELLRMASPPVRGSQAGDVYSFGIILQEIALRSGVFHVEGLDLSPKEIIERVTRGEQPPFRPSLALQSHLEELGLLMQRCWAEDPQERPPFQQIRLTLRKFNRENSSNILDNLLSRMEQYANNLEELVEERTQAYLEEKRKAEALLYQILPHSVAEQLKRGETVQAEAFDSVTIYFSDIVGFTALSAESTPMQVVTLLNDLYTCFDAVIDNFDVYKVETIGDAYMVVSGLPVRNGRLHACEVARMALALLDAVRSFRIRHRPQEQLRLRIGIHTGPVCAGVVGLKMPRYCLFGDTVNTASRMESNGEALKIHLSSETKAVLEEFGGFELELRGDVEMKGKGKVRTYWLLGERGSSTRG</sequence>
<protein>
    <recommendedName>
        <fullName evidence="11">Atrial natriuretic peptide receptor 1</fullName>
        <ecNumber evidence="6">4.6.1.2</ecNumber>
    </recommendedName>
    <alternativeName>
        <fullName>Atrial natriuretic peptide receptor type A</fullName>
        <shortName>ANP-A</shortName>
        <shortName>ANPR-A</shortName>
        <shortName>NPR-A</shortName>
    </alternativeName>
    <alternativeName>
        <fullName>Guanylate cyclase A</fullName>
        <shortName>GC-A</shortName>
    </alternativeName>
</protein>
<comment type="function">
    <text evidence="6 9 10">Receptor for the atrial natriuretic peptide NPPA/ANP and the brain natriuretic peptide NPPB/BNP which are potent vasoactive hormones playing a key role in cardiovascular homeostasis (PubMed:39543315). Plays an essential role in the regulation of endothelial cell senescence and vascular aging (PubMed:36016499). Upon activation by ANP or BNP, stimulates the production of cyclic guanosine monophosphate (cGMP) that promotes vascular tone and volume homeostasis by activation of protein kinase cGMP-dependent 1/PRKG1 and subsequently PRKAA1, thereby controlling blood pressure and maintaining cardiovascular homeostasis (PubMed:36016499).</text>
</comment>
<comment type="catalytic activity">
    <reaction evidence="6">
        <text>GTP = 3',5'-cyclic GMP + diphosphate</text>
        <dbReference type="Rhea" id="RHEA:13665"/>
        <dbReference type="ChEBI" id="CHEBI:33019"/>
        <dbReference type="ChEBI" id="CHEBI:37565"/>
        <dbReference type="ChEBI" id="CHEBI:57746"/>
        <dbReference type="EC" id="4.6.1.2"/>
    </reaction>
    <physiologicalReaction direction="left-to-right" evidence="12">
        <dbReference type="Rhea" id="RHEA:13666"/>
    </physiologicalReaction>
</comment>
<comment type="subunit">
    <text evidence="10">Homodimer.</text>
</comment>
<comment type="subcellular location">
    <subcellularLocation>
        <location>Membrane</location>
        <topology>Single-pass type I membrane protein</topology>
    </subcellularLocation>
</comment>
<comment type="induction">
    <text evidence="9">Expression is chronologically prohibited with ages.</text>
</comment>
<comment type="PTM">
    <text evidence="1">Phosphorylation of the protein kinase-like domain is required for full activation by ANP.</text>
</comment>
<comment type="similarity">
    <text evidence="4">Belongs to the adenylyl cyclase class-4/guanylyl cyclase family.</text>
</comment>
<reference key="1">
    <citation type="journal article" date="1989" name="EMBO J.">
        <title>Human atrial natriuretic peptide receptor defines a new paradigm for second messenger signal transduction.</title>
        <authorList>
            <person name="Lowe D.G."/>
            <person name="Chang M.S."/>
            <person name="Hellmiss R."/>
            <person name="Chen E."/>
            <person name="Singh S."/>
            <person name="Garbers D.L."/>
            <person name="Goeddel D.V."/>
        </authorList>
    </citation>
    <scope>NUCLEOTIDE SEQUENCE [MRNA]</scope>
    <source>
        <tissue>Kidney</tissue>
    </source>
</reference>
<reference key="2">
    <citation type="journal article" date="1998" name="Biochem. Biophys. Res. Commun.">
        <title>Organization of the human natriuretic peptide receptor A gene.</title>
        <authorList>
            <person name="Takahashi Y."/>
            <person name="Nakayama T."/>
            <person name="Soma M."/>
            <person name="Izumi Y."/>
            <person name="Kanmatsuse K."/>
        </authorList>
    </citation>
    <scope>NUCLEOTIDE SEQUENCE [GENOMIC DNA]</scope>
    <source>
        <tissue>Blood</tissue>
    </source>
</reference>
<reference key="3">
    <citation type="submission" date="1999-09" db="EMBL/GenBank/DDBJ databases">
        <title>Identification of functional polymorphisms in noncoding regions of the human natriuretic peptide receptor A gene.</title>
        <authorList>
            <person name="Maeda N."/>
            <person name="Knowles J.W."/>
        </authorList>
    </citation>
    <scope>NUCLEOTIDE SEQUENCE [GENOMIC DNA]</scope>
</reference>
<reference key="4">
    <citation type="submission" date="2007-12" db="EMBL/GenBank/DDBJ databases">
        <authorList>
            <consortium name="NHLBI resequencing and genotyping service (RS&amp;G)"/>
        </authorList>
    </citation>
    <scope>NUCLEOTIDE SEQUENCE [GENOMIC DNA]</scope>
</reference>
<reference key="5">
    <citation type="journal article" date="2006" name="Nature">
        <title>The DNA sequence and biological annotation of human chromosome 1.</title>
        <authorList>
            <person name="Gregory S.G."/>
            <person name="Barlow K.F."/>
            <person name="McLay K.E."/>
            <person name="Kaul R."/>
            <person name="Swarbreck D."/>
            <person name="Dunham A."/>
            <person name="Scott C.E."/>
            <person name="Howe K.L."/>
            <person name="Woodfine K."/>
            <person name="Spencer C.C.A."/>
            <person name="Jones M.C."/>
            <person name="Gillson C."/>
            <person name="Searle S."/>
            <person name="Zhou Y."/>
            <person name="Kokocinski F."/>
            <person name="McDonald L."/>
            <person name="Evans R."/>
            <person name="Phillips K."/>
            <person name="Atkinson A."/>
            <person name="Cooper R."/>
            <person name="Jones C."/>
            <person name="Hall R.E."/>
            <person name="Andrews T.D."/>
            <person name="Lloyd C."/>
            <person name="Ainscough R."/>
            <person name="Almeida J.P."/>
            <person name="Ambrose K.D."/>
            <person name="Anderson F."/>
            <person name="Andrew R.W."/>
            <person name="Ashwell R.I.S."/>
            <person name="Aubin K."/>
            <person name="Babbage A.K."/>
            <person name="Bagguley C.L."/>
            <person name="Bailey J."/>
            <person name="Beasley H."/>
            <person name="Bethel G."/>
            <person name="Bird C.P."/>
            <person name="Bray-Allen S."/>
            <person name="Brown J.Y."/>
            <person name="Brown A.J."/>
            <person name="Buckley D."/>
            <person name="Burton J."/>
            <person name="Bye J."/>
            <person name="Carder C."/>
            <person name="Chapman J.C."/>
            <person name="Clark S.Y."/>
            <person name="Clarke G."/>
            <person name="Clee C."/>
            <person name="Cobley V."/>
            <person name="Collier R.E."/>
            <person name="Corby N."/>
            <person name="Coville G.J."/>
            <person name="Davies J."/>
            <person name="Deadman R."/>
            <person name="Dunn M."/>
            <person name="Earthrowl M."/>
            <person name="Ellington A.G."/>
            <person name="Errington H."/>
            <person name="Frankish A."/>
            <person name="Frankland J."/>
            <person name="French L."/>
            <person name="Garner P."/>
            <person name="Garnett J."/>
            <person name="Gay L."/>
            <person name="Ghori M.R.J."/>
            <person name="Gibson R."/>
            <person name="Gilby L.M."/>
            <person name="Gillett W."/>
            <person name="Glithero R.J."/>
            <person name="Grafham D.V."/>
            <person name="Griffiths C."/>
            <person name="Griffiths-Jones S."/>
            <person name="Grocock R."/>
            <person name="Hammond S."/>
            <person name="Harrison E.S.I."/>
            <person name="Hart E."/>
            <person name="Haugen E."/>
            <person name="Heath P.D."/>
            <person name="Holmes S."/>
            <person name="Holt K."/>
            <person name="Howden P.J."/>
            <person name="Hunt A.R."/>
            <person name="Hunt S.E."/>
            <person name="Hunter G."/>
            <person name="Isherwood J."/>
            <person name="James R."/>
            <person name="Johnson C."/>
            <person name="Johnson D."/>
            <person name="Joy A."/>
            <person name="Kay M."/>
            <person name="Kershaw J.K."/>
            <person name="Kibukawa M."/>
            <person name="Kimberley A.M."/>
            <person name="King A."/>
            <person name="Knights A.J."/>
            <person name="Lad H."/>
            <person name="Laird G."/>
            <person name="Lawlor S."/>
            <person name="Leongamornlert D.A."/>
            <person name="Lloyd D.M."/>
            <person name="Loveland J."/>
            <person name="Lovell J."/>
            <person name="Lush M.J."/>
            <person name="Lyne R."/>
            <person name="Martin S."/>
            <person name="Mashreghi-Mohammadi M."/>
            <person name="Matthews L."/>
            <person name="Matthews N.S.W."/>
            <person name="McLaren S."/>
            <person name="Milne S."/>
            <person name="Mistry S."/>
            <person name="Moore M.J.F."/>
            <person name="Nickerson T."/>
            <person name="O'Dell C.N."/>
            <person name="Oliver K."/>
            <person name="Palmeiri A."/>
            <person name="Palmer S.A."/>
            <person name="Parker A."/>
            <person name="Patel D."/>
            <person name="Pearce A.V."/>
            <person name="Peck A.I."/>
            <person name="Pelan S."/>
            <person name="Phelps K."/>
            <person name="Phillimore B.J."/>
            <person name="Plumb R."/>
            <person name="Rajan J."/>
            <person name="Raymond C."/>
            <person name="Rouse G."/>
            <person name="Saenphimmachak C."/>
            <person name="Sehra H.K."/>
            <person name="Sheridan E."/>
            <person name="Shownkeen R."/>
            <person name="Sims S."/>
            <person name="Skuce C.D."/>
            <person name="Smith M."/>
            <person name="Steward C."/>
            <person name="Subramanian S."/>
            <person name="Sycamore N."/>
            <person name="Tracey A."/>
            <person name="Tromans A."/>
            <person name="Van Helmond Z."/>
            <person name="Wall M."/>
            <person name="Wallis J.M."/>
            <person name="White S."/>
            <person name="Whitehead S.L."/>
            <person name="Wilkinson J.E."/>
            <person name="Willey D.L."/>
            <person name="Williams H."/>
            <person name="Wilming L."/>
            <person name="Wray P.W."/>
            <person name="Wu Z."/>
            <person name="Coulson A."/>
            <person name="Vaudin M."/>
            <person name="Sulston J.E."/>
            <person name="Durbin R.M."/>
            <person name="Hubbard T."/>
            <person name="Wooster R."/>
            <person name="Dunham I."/>
            <person name="Carter N.P."/>
            <person name="McVean G."/>
            <person name="Ross M.T."/>
            <person name="Harrow J."/>
            <person name="Olson M.V."/>
            <person name="Beck S."/>
            <person name="Rogers J."/>
            <person name="Bentley D.R."/>
        </authorList>
    </citation>
    <scope>NUCLEOTIDE SEQUENCE [LARGE SCALE GENOMIC DNA]</scope>
</reference>
<reference key="6">
    <citation type="submission" date="2005-09" db="EMBL/GenBank/DDBJ databases">
        <authorList>
            <person name="Mural R.J."/>
            <person name="Istrail S."/>
            <person name="Sutton G.G."/>
            <person name="Florea L."/>
            <person name="Halpern A.L."/>
            <person name="Mobarry C.M."/>
            <person name="Lippert R."/>
            <person name="Walenz B."/>
            <person name="Shatkay H."/>
            <person name="Dew I."/>
            <person name="Miller J.R."/>
            <person name="Flanigan M.J."/>
            <person name="Edwards N.J."/>
            <person name="Bolanos R."/>
            <person name="Fasulo D."/>
            <person name="Halldorsson B.V."/>
            <person name="Hannenhalli S."/>
            <person name="Turner R."/>
            <person name="Yooseph S."/>
            <person name="Lu F."/>
            <person name="Nusskern D.R."/>
            <person name="Shue B.C."/>
            <person name="Zheng X.H."/>
            <person name="Zhong F."/>
            <person name="Delcher A.L."/>
            <person name="Huson D.H."/>
            <person name="Kravitz S.A."/>
            <person name="Mouchard L."/>
            <person name="Reinert K."/>
            <person name="Remington K.A."/>
            <person name="Clark A.G."/>
            <person name="Waterman M.S."/>
            <person name="Eichler E.E."/>
            <person name="Adams M.D."/>
            <person name="Hunkapiller M.W."/>
            <person name="Myers E.W."/>
            <person name="Venter J.C."/>
        </authorList>
    </citation>
    <scope>NUCLEOTIDE SEQUENCE [LARGE SCALE GENOMIC DNA]</scope>
</reference>
<reference key="7">
    <citation type="journal article" date="2004" name="Genome Res.">
        <title>The status, quality, and expansion of the NIH full-length cDNA project: the Mammalian Gene Collection (MGC).</title>
        <authorList>
            <consortium name="The MGC Project Team"/>
        </authorList>
    </citation>
    <scope>NUCLEOTIDE SEQUENCE [LARGE SCALE MRNA]</scope>
    <source>
        <tissue>Placenta</tissue>
    </source>
</reference>
<reference key="8">
    <citation type="journal article" date="1994" name="Cell. Mol. Neurobiol.">
        <title>Expression of mRNA for atrial natriuretic peptide receptor guanylate cyclase (ANPRA) in human retina.</title>
        <authorList>
            <person name="Pardhasaradhi K."/>
            <person name="Kutty R.K."/>
            <person name="Gentleman S."/>
            <person name="Krishna G."/>
        </authorList>
    </citation>
    <scope>NUCLEOTIDE SEQUENCE [MRNA] OF 634-1048</scope>
    <source>
        <tissue>Retina</tissue>
    </source>
</reference>
<reference key="9">
    <citation type="journal article" date="1991" name="J. Biol. Chem.">
        <title>Extracellular domain-IgG fusion proteins for three human natriuretic peptide receptors. Hormone pharmacology and application to solid phase screening of synthetic peptide antisera.</title>
        <authorList>
            <person name="Bennett B.D."/>
            <person name="Bennett G.L."/>
            <person name="Vitangcol R.V."/>
            <person name="Jewett J.R."/>
            <person name="Burnier J."/>
            <person name="Henzel W."/>
            <person name="Lowe D.G."/>
        </authorList>
    </citation>
    <scope>LIGAND-BINDING</scope>
</reference>
<reference key="10">
    <citation type="journal article" date="1991" name="Science">
        <title>Selective activation of the B natriuretic peptide receptor by C-type natriuretic peptide (CNP).</title>
        <authorList>
            <person name="Koller K.J."/>
            <person name="Lowe D.G."/>
            <person name="Bennett G.L."/>
            <person name="Minamino N."/>
            <person name="Kangawa K."/>
            <person name="Matsuo H."/>
            <person name="Goeddel D.V."/>
        </authorList>
    </citation>
    <scope>FUNCTION</scope>
    <scope>CATALYTIC ACTIVITY</scope>
</reference>
<reference key="11">
    <citation type="journal article" date="2010" name="Biochemistry">
        <title>Mass spectrometric identification of phosphorylation sites in guanylyl cyclase A and B.</title>
        <authorList>
            <person name="Yoder A.R."/>
            <person name="Stone M.D."/>
            <person name="Griffin T.J."/>
            <person name="Potter L.R."/>
        </authorList>
    </citation>
    <scope>PHOSPHORYLATION AT SER-519; SER-529; THR-532; SER-534 AND SER-538</scope>
</reference>
<reference key="12">
    <citation type="journal article" date="2013" name="J. Proteome Res.">
        <title>Toward a comprehensive characterization of a human cancer cell phosphoproteome.</title>
        <authorList>
            <person name="Zhou H."/>
            <person name="Di Palma S."/>
            <person name="Preisinger C."/>
            <person name="Peng M."/>
            <person name="Polat A.N."/>
            <person name="Heck A.J."/>
            <person name="Mohammed S."/>
        </authorList>
    </citation>
    <scope>IDENTIFICATION BY MASS SPECTROMETRY [LARGE SCALE ANALYSIS]</scope>
    <source>
        <tissue>Cervix carcinoma</tissue>
    </source>
</reference>
<reference key="13">
    <citation type="journal article" date="2007" name="Nature">
        <title>Patterns of somatic mutation in human cancer genomes.</title>
        <authorList>
            <person name="Greenman C."/>
            <person name="Stephens P."/>
            <person name="Smith R."/>
            <person name="Dalgliesh G.L."/>
            <person name="Hunter C."/>
            <person name="Bignell G."/>
            <person name="Davies H."/>
            <person name="Teague J."/>
            <person name="Butler A."/>
            <person name="Stevens C."/>
            <person name="Edkins S."/>
            <person name="O'Meara S."/>
            <person name="Vastrik I."/>
            <person name="Schmidt E.E."/>
            <person name="Avis T."/>
            <person name="Barthorpe S."/>
            <person name="Bhamra G."/>
            <person name="Buck G."/>
            <person name="Choudhury B."/>
            <person name="Clements J."/>
            <person name="Cole J."/>
            <person name="Dicks E."/>
            <person name="Forbes S."/>
            <person name="Gray K."/>
            <person name="Halliday K."/>
            <person name="Harrison R."/>
            <person name="Hills K."/>
            <person name="Hinton J."/>
            <person name="Jenkinson A."/>
            <person name="Jones D."/>
            <person name="Menzies A."/>
            <person name="Mironenko T."/>
            <person name="Perry J."/>
            <person name="Raine K."/>
            <person name="Richardson D."/>
            <person name="Shepherd R."/>
            <person name="Small A."/>
            <person name="Tofts C."/>
            <person name="Varian J."/>
            <person name="Webb T."/>
            <person name="West S."/>
            <person name="Widaa S."/>
            <person name="Yates A."/>
            <person name="Cahill D.P."/>
            <person name="Louis D.N."/>
            <person name="Goldstraw P."/>
            <person name="Nicholson A.G."/>
            <person name="Brasseur F."/>
            <person name="Looijenga L."/>
            <person name="Weber B.L."/>
            <person name="Chiew Y.-E."/>
            <person name="DeFazio A."/>
            <person name="Greaves M.F."/>
            <person name="Green A.R."/>
            <person name="Campbell P."/>
            <person name="Birney E."/>
            <person name="Easton D.F."/>
            <person name="Chenevix-Trench G."/>
            <person name="Tan M.-H."/>
            <person name="Khoo S.K."/>
            <person name="Teh B.T."/>
            <person name="Yuen S.T."/>
            <person name="Leung S.Y."/>
            <person name="Wooster R."/>
            <person name="Futreal P.A."/>
            <person name="Stratton M.R."/>
        </authorList>
    </citation>
    <scope>VARIANTS [LARGE SCALE ANALYSIS] VAL-182; CYS-270; MET-755; GLN-939 AND LYS-967</scope>
</reference>
<reference key="14">
    <citation type="journal article" date="2022" name="Aging Cell">
        <title>Chronological attenuation of NPRA/PKG/AMPK signaling promotes vascular aging and elevates blood pressure.</title>
        <authorList>
            <person name="Long C."/>
            <person name="Liu H."/>
            <person name="Zhan W."/>
            <person name="Chen L."/>
            <person name="Yu Z."/>
            <person name="Tian S."/>
            <person name="Xiang Y."/>
            <person name="Chen S."/>
            <person name="Tian X.L."/>
        </authorList>
    </citation>
    <scope>FUNCTION</scope>
    <scope>INDUCTION</scope>
</reference>
<reference evidence="14 15 16 17 18 19 20" key="15">
    <citation type="journal article" date="2024" name="Nat. Struct. Mol. Biol.">
        <title>Architecture and activation of single-pass transmembrane receptor guanylyl cyclase.</title>
        <authorList>
            <person name="Liu S."/>
            <person name="Payne A.M."/>
            <person name="Wang J."/>
            <person name="Zhu L."/>
            <person name="Paknejad N."/>
            <person name="Eng E.T."/>
            <person name="Liu W."/>
            <person name="Miao Y."/>
            <person name="Hite R.K."/>
            <person name="Huang X.Y."/>
        </authorList>
    </citation>
    <scope>STRUCTURE BY ELECTRON MICROSCOPY (2.90 ANGSTROMS) OF 32-1061</scope>
    <scope>DISULFIDE BONDS</scope>
    <scope>FUNCTION</scope>
    <scope>SUBUNIT</scope>
</reference>
<name>ANPRA_HUMAN</name>